<reference evidence="14" key="1">
    <citation type="journal article" date="2004" name="J. Biol. Chem.">
        <title>Characterization of the yam tuber storage proteins from Dioscorea batatas exhibiting unique lectin activities.</title>
        <authorList>
            <person name="Gaidamashvili M."/>
            <person name="Ohizum Y."/>
            <person name="Iijima S."/>
            <person name="Takayama T."/>
            <person name="Ogawa T."/>
            <person name="Muramoto K."/>
        </authorList>
    </citation>
    <scope>NUCLEOTIDE SEQUENCE [MRNA]</scope>
    <scope>PROTEIN SEQUENCE OF 23-263</scope>
    <scope>FUNCTION</scope>
    <scope>SUBUNIT</scope>
    <scope>TISSUE SPECIFICITY</scope>
    <scope>PTM</scope>
    <scope>IDENTIFICATION BY MASS SPECTROMETRY</scope>
    <scope>DISULFIDE BOND</scope>
    <source>
        <tissue evidence="9 14">Tuber</tissue>
    </source>
</reference>
<reference key="2">
    <citation type="journal article" date="2008" name="J. Korean Med. Sci.">
        <title>Identification of Dioscorea batatas (sanyak) allergen as an inhalant and oral allergen.</title>
        <authorList>
            <person name="Hur G.Y."/>
            <person name="Park H.J."/>
            <person name="Kim H.A."/>
            <person name="Ye Y.M."/>
            <person name="Park H.S."/>
        </authorList>
    </citation>
    <scope>PROTEIN SEQUENCE OF 22-41</scope>
    <scope>TISSUE SPECIFICITY</scope>
    <scope>ALLERGEN</scope>
    <source>
        <tissue evidence="10">Tuber</tissue>
    </source>
</reference>
<reference key="3">
    <citation type="journal article" date="1999" name="J. Agric. Food Chem.">
        <title>Dioscorin, the major tuber storage protein of yam (Dioscorea batatas decne) with carbonic anhydrase and trypsin inhibitor activities.</title>
        <authorList>
            <person name="Hou W.C."/>
            <person name="Liu J.S."/>
            <person name="Chen H.J."/>
            <person name="Chen T.E."/>
            <person name="Chang C.F."/>
            <person name="Lin Y.H."/>
        </authorList>
    </citation>
    <scope>PROTEIN SEQUENCE OF 23-43</scope>
    <scope>FUNCTION</scope>
    <scope>CATALYTIC ACTIVITY</scope>
    <scope>TISSUE SPECIFICITY</scope>
</reference>
<reference key="4">
    <citation type="journal article" date="2018" name="Asia Pac. Allergy">
        <title>Identification of a thermal stable allergen in yam (Dioscorea opposita) to cause anaphylaxis.</title>
        <authorList>
            <person name="Xu Y.Y."/>
            <person name="Yin J."/>
        </authorList>
    </citation>
    <scope>PROTEIN SEQUENCE OF 23-35</scope>
    <scope>ALLERGEN</scope>
</reference>
<reference key="5">
    <citation type="journal article" date="1999" name="Plant Sci.">
        <title>Dioscorins, the major tuber storage proteins of yam (Dioscorea batatas Decne), with dehydroascorbate reductase and monodehydroascorbate reductase activities.</title>
        <authorList>
            <person name="Hou W.C."/>
            <person name="Chen H.J."/>
            <person name="Lin Y.H."/>
        </authorList>
    </citation>
    <scope>FUNCTION</scope>
    <scope>CATALYTIC ACTIVITY</scope>
    <scope>TISSUE SPECIFICITY</scope>
</reference>
<reference key="6">
    <citation type="journal article" date="2001" name="J. Agric. Food Chem.">
        <title>Antioxidant activities of dioscorin, the storage protein of yam (Dioscorea batatas Decne) tuber.</title>
        <authorList>
            <person name="Hou W.C."/>
            <person name="Lee M.H."/>
            <person name="Chen H.J."/>
            <person name="Liang W.L."/>
            <person name="Han C.H."/>
            <person name="Liu Y.W."/>
            <person name="Lin Y.H."/>
        </authorList>
    </citation>
    <scope>FUNCTION</scope>
    <scope>TISSUE SPECIFICITY</scope>
</reference>
<name>DB3S_DIOPO</name>
<dbReference type="EC" id="1.6.5.4" evidence="8"/>
<dbReference type="EC" id="4.2.1.1" evidence="3"/>
<dbReference type="EMBL" id="AB178473">
    <property type="protein sequence ID" value="BAD18021.1"/>
    <property type="molecule type" value="mRNA"/>
</dbReference>
<dbReference type="SMR" id="Q75N34"/>
<dbReference type="Allergome" id="4051">
    <property type="allergen name" value="Dio p TSP"/>
</dbReference>
<dbReference type="GO" id="GO:0016209">
    <property type="term" value="F:antioxidant activity"/>
    <property type="evidence" value="ECO:0000314"/>
    <property type="project" value="UniProtKB"/>
</dbReference>
<dbReference type="GO" id="GO:0004089">
    <property type="term" value="F:carbonate dehydratase activity"/>
    <property type="evidence" value="ECO:0000314"/>
    <property type="project" value="UniProtKB"/>
</dbReference>
<dbReference type="GO" id="GO:0031418">
    <property type="term" value="F:L-ascorbic acid binding"/>
    <property type="evidence" value="ECO:0000250"/>
    <property type="project" value="UniProtKB"/>
</dbReference>
<dbReference type="GO" id="GO:0016656">
    <property type="term" value="F:monodehydroascorbate reductase (NADH) activity"/>
    <property type="evidence" value="ECO:0000314"/>
    <property type="project" value="UniProtKB"/>
</dbReference>
<dbReference type="GO" id="GO:0045735">
    <property type="term" value="F:nutrient reservoir activity"/>
    <property type="evidence" value="ECO:0007669"/>
    <property type="project" value="UniProtKB-KW"/>
</dbReference>
<dbReference type="GO" id="GO:0042803">
    <property type="term" value="F:protein homodimerization activity"/>
    <property type="evidence" value="ECO:0000314"/>
    <property type="project" value="UniProtKB"/>
</dbReference>
<dbReference type="GO" id="GO:0004867">
    <property type="term" value="F:serine-type endopeptidase inhibitor activity"/>
    <property type="evidence" value="ECO:0000314"/>
    <property type="project" value="UniProtKB"/>
</dbReference>
<dbReference type="GO" id="GO:0008270">
    <property type="term" value="F:zinc ion binding"/>
    <property type="evidence" value="ECO:0007669"/>
    <property type="project" value="InterPro"/>
</dbReference>
<dbReference type="GO" id="GO:0015976">
    <property type="term" value="P:carbon utilization"/>
    <property type="evidence" value="ECO:0000305"/>
    <property type="project" value="UniProtKB"/>
</dbReference>
<dbReference type="GO" id="GO:0098869">
    <property type="term" value="P:cellular oxidant detoxification"/>
    <property type="evidence" value="ECO:0000314"/>
    <property type="project" value="UniProtKB"/>
</dbReference>
<dbReference type="GO" id="GO:0071244">
    <property type="term" value="P:cellular response to carbon dioxide"/>
    <property type="evidence" value="ECO:0000305"/>
    <property type="project" value="UniProtKB"/>
</dbReference>
<dbReference type="GO" id="GO:0006730">
    <property type="term" value="P:one-carbon metabolic process"/>
    <property type="evidence" value="ECO:0007669"/>
    <property type="project" value="TreeGrafter"/>
</dbReference>
<dbReference type="GO" id="GO:0010628">
    <property type="term" value="P:positive regulation of gene expression"/>
    <property type="evidence" value="ECO:0000250"/>
    <property type="project" value="UniProtKB"/>
</dbReference>
<dbReference type="GO" id="GO:0050766">
    <property type="term" value="P:positive regulation of phagocytosis"/>
    <property type="evidence" value="ECO:0000250"/>
    <property type="project" value="UniProtKB"/>
</dbReference>
<dbReference type="GO" id="GO:0000305">
    <property type="term" value="P:response to oxygen radical"/>
    <property type="evidence" value="ECO:0000305"/>
    <property type="project" value="UniProtKB"/>
</dbReference>
<dbReference type="CDD" id="cd03124">
    <property type="entry name" value="alpha_CA_prokaryotic_like"/>
    <property type="match status" value="1"/>
</dbReference>
<dbReference type="Gene3D" id="3.10.200.10">
    <property type="entry name" value="Alpha carbonic anhydrase"/>
    <property type="match status" value="1"/>
</dbReference>
<dbReference type="InterPro" id="IPR041891">
    <property type="entry name" value="Alpha_CA_prokaryot-like"/>
</dbReference>
<dbReference type="InterPro" id="IPR001148">
    <property type="entry name" value="CA_dom"/>
</dbReference>
<dbReference type="InterPro" id="IPR036398">
    <property type="entry name" value="CA_dom_sf"/>
</dbReference>
<dbReference type="InterPro" id="IPR023561">
    <property type="entry name" value="Carbonic_anhydrase_a-class"/>
</dbReference>
<dbReference type="PANTHER" id="PTHR18952">
    <property type="entry name" value="CARBONIC ANHYDRASE"/>
    <property type="match status" value="1"/>
</dbReference>
<dbReference type="PANTHER" id="PTHR18952:SF253">
    <property type="entry name" value="OS08G0470200 PROTEIN"/>
    <property type="match status" value="1"/>
</dbReference>
<dbReference type="Pfam" id="PF00194">
    <property type="entry name" value="Carb_anhydrase"/>
    <property type="match status" value="1"/>
</dbReference>
<dbReference type="SMART" id="SM01057">
    <property type="entry name" value="Carb_anhydrase"/>
    <property type="match status" value="1"/>
</dbReference>
<dbReference type="SUPFAM" id="SSF51069">
    <property type="entry name" value="Carbonic anhydrase"/>
    <property type="match status" value="1"/>
</dbReference>
<dbReference type="PROSITE" id="PS51144">
    <property type="entry name" value="ALPHA_CA_2"/>
    <property type="match status" value="1"/>
</dbReference>
<evidence type="ECO:0000250" key="1">
    <source>
        <dbReference type="UniProtKB" id="A7MAQ2"/>
    </source>
</evidence>
<evidence type="ECO:0000255" key="2">
    <source>
        <dbReference type="PROSITE-ProRule" id="PRU01134"/>
    </source>
</evidence>
<evidence type="ECO:0000269" key="3">
    <source>
    </source>
</evidence>
<evidence type="ECO:0000269" key="4">
    <source>
    </source>
</evidence>
<evidence type="ECO:0000269" key="5">
    <source>
    </source>
</evidence>
<evidence type="ECO:0000269" key="6">
    <source>
    </source>
</evidence>
<evidence type="ECO:0000269" key="7">
    <source>
    </source>
</evidence>
<evidence type="ECO:0000269" key="8">
    <source ref="5"/>
</evidence>
<evidence type="ECO:0000303" key="9">
    <source>
    </source>
</evidence>
<evidence type="ECO:0000303" key="10">
    <source>
    </source>
</evidence>
<evidence type="ECO:0000303" key="11">
    <source>
    </source>
</evidence>
<evidence type="ECO:0000305" key="12"/>
<evidence type="ECO:0000305" key="13">
    <source>
    </source>
</evidence>
<evidence type="ECO:0000312" key="14">
    <source>
        <dbReference type="EMBL" id="BAD18021.1"/>
    </source>
</evidence>
<organism>
    <name type="scientific">Dioscorea polystachya</name>
    <name type="common">Chinese yam</name>
    <dbReference type="NCBI Taxonomy" id="55575"/>
    <lineage>
        <taxon>Eukaryota</taxon>
        <taxon>Viridiplantae</taxon>
        <taxon>Streptophyta</taxon>
        <taxon>Embryophyta</taxon>
        <taxon>Tracheophyta</taxon>
        <taxon>Spermatophyta</taxon>
        <taxon>Magnoliopsida</taxon>
        <taxon>Liliopsida</taxon>
        <taxon>Dioscoreales</taxon>
        <taxon>Dioscoreaceae</taxon>
        <taxon>Dioscorea</taxon>
    </lineage>
</organism>
<accession>Q75N34</accession>
<protein>
    <recommendedName>
        <fullName evidence="9 10 11">Dioscorin DB3S</fullName>
        <ecNumber evidence="8">1.6.5.4</ecNumber>
        <ecNumber evidence="3">4.2.1.1</ecNumber>
    </recommendedName>
    <alternativeName>
        <fullName evidence="10">Tuber storage protein DB3S</fullName>
    </alternativeName>
    <allergenName evidence="12">Dio p TSP</allergenName>
</protein>
<sequence length="268" mass="30460">MSSSTLLHLLLLSSLLFSCLANVEDEFSYIEGNPNGPENWGNLKPEWETCGKGMEQSPIQLRDNRVIFDQTLGRLRRNYRAVDARLRNSGHDVLVEFKGNAGSLSINRVAYQLKRIHFHSPSEHEMNGERFDLEAQLVHESQDQKRAVVSILFIFGRADPFLSDLEDFIKQFSSSQKNEINAGVVDPNQLQIDDSAYYRYMGSFTAPPCTEGISWTVMRKVATVSPRQVLLLKQAVNENAINNARPLQPTNFRSVFYFEQLKSKVCAI</sequence>
<feature type="signal peptide" evidence="12">
    <location>
        <begin position="1"/>
        <end status="unknown"/>
    </location>
</feature>
<feature type="chain" id="PRO_5004286658" description="Dioscorin DB3S" evidence="12">
    <location>
        <begin status="unknown"/>
        <end position="268"/>
    </location>
</feature>
<feature type="domain" description="Alpha-carbonic anhydrase" evidence="2">
    <location>
        <begin position="25"/>
        <end position="259"/>
    </location>
</feature>
<feature type="active site" description="Proton acceptor" evidence="2">
    <location>
        <position position="91"/>
    </location>
</feature>
<feature type="binding site" evidence="1">
    <location>
        <position position="92"/>
    </location>
    <ligand>
        <name>L-ascorbate</name>
        <dbReference type="ChEBI" id="CHEBI:38290"/>
    </ligand>
</feature>
<feature type="binding site" evidence="1">
    <location>
        <begin position="117"/>
        <end position="119"/>
    </location>
    <ligand>
        <name>L-ascorbate</name>
        <dbReference type="ChEBI" id="CHEBI:38290"/>
    </ligand>
</feature>
<feature type="binding site" evidence="1">
    <location>
        <position position="136"/>
    </location>
    <ligand>
        <name>L-ascorbate</name>
        <dbReference type="ChEBI" id="CHEBI:38290"/>
    </ligand>
</feature>
<feature type="binding site" evidence="1">
    <location>
        <begin position="205"/>
        <end position="206"/>
    </location>
    <ligand>
        <name>L-ascorbate</name>
        <dbReference type="ChEBI" id="CHEBI:38290"/>
    </ligand>
</feature>
<feature type="disulfide bond" evidence="13">
    <location>
        <begin position="50"/>
        <end position="209"/>
    </location>
</feature>
<feature type="sequence conflict" description="In Ref. 4; AA sequence." evidence="12" ref="4">
    <original>N</original>
    <variation>H</variation>
    <location>
        <position position="35"/>
    </location>
</feature>
<gene>
    <name evidence="14" type="primary">DB3S</name>
</gene>
<keyword id="KW-0020">Allergen</keyword>
<keyword id="KW-0049">Antioxidant</keyword>
<keyword id="KW-0903">Direct protein sequencing</keyword>
<keyword id="KW-1015">Disulfide bond</keyword>
<keyword id="KW-0456">Lyase</keyword>
<keyword id="KW-0560">Oxidoreductase</keyword>
<keyword id="KW-0732">Signal</keyword>
<keyword id="KW-0758">Storage protein</keyword>
<comment type="function">
    <text evidence="1 3 4 5 8 12">Storage protein of tuber. Involved in protection against oxidative stress (Probable). Has carbonate dehydratase and weak trypsin inhibitor activity detected by measuring the dehydration of sodium bicarbonate and the inhibition of trypsin-catalyzed hydrolysis of N-benzoyl-L-arginine-4-nitro anilide, respectively (PubMed:10552514). Contrarily, no carbonate dehydratase or trypsin inhibitor activity detected by measuring the hydrolysis of 4-nitrophenyl acetate or the inhibition of bovine trypsin-catalyzed hydrolysis of N-benzoyl-L-arginine ethyl ester, respectively (PubMed:15047697). Has dehydroascorbate (DHA) reductase and monodehydroascorbate (MDA) reductase activities (Ref.5). Catalyzes the reactions of carbonate dehydratase and DHA reductase independently of zinc and glutathione (GSH). The coupled reaction is capable of recycling a plant antioxidant ascorbate using ubiquitous compounds H(2)O and CO(2) (By similarity). Exhibits antioxidant activity. Able to scavenge 1,1-diphenyl-2-picrylhydrazyl (DPPH) radical and hydroxyl radicals (PubMed:11600050). Exhibits immunomodulatory activity. Activates Toll-like receptor 4 signaling pathways by up-regulating the gene expression of pro-inflammatory cytokines, such as tumor necrosis factor alpha, interleukin-1 beta and interleukin-6, and chemokines RANTES and MCP-1, in mouse RAW 264.7 macrophages. Stimulates the phagocytosis of E.coli by the LPS-treated mouse macrophages (By similarity).</text>
</comment>
<comment type="catalytic activity">
    <reaction evidence="3">
        <text>hydrogencarbonate + H(+) = CO2 + H2O</text>
        <dbReference type="Rhea" id="RHEA:10748"/>
        <dbReference type="ChEBI" id="CHEBI:15377"/>
        <dbReference type="ChEBI" id="CHEBI:15378"/>
        <dbReference type="ChEBI" id="CHEBI:16526"/>
        <dbReference type="ChEBI" id="CHEBI:17544"/>
        <dbReference type="EC" id="4.2.1.1"/>
    </reaction>
</comment>
<comment type="catalytic activity">
    <reaction evidence="8">
        <text>2 monodehydro-L-ascorbate radical + NADH + H(+) = 2 L-ascorbate + NAD(+)</text>
        <dbReference type="Rhea" id="RHEA:14581"/>
        <dbReference type="ChEBI" id="CHEBI:15378"/>
        <dbReference type="ChEBI" id="CHEBI:38290"/>
        <dbReference type="ChEBI" id="CHEBI:57540"/>
        <dbReference type="ChEBI" id="CHEBI:57945"/>
        <dbReference type="ChEBI" id="CHEBI:59513"/>
        <dbReference type="EC" id="1.6.5.4"/>
    </reaction>
</comment>
<comment type="subunit">
    <text evidence="1 5">Monomer (By similarity). Homodimer (PubMed:15047697).</text>
</comment>
<comment type="tissue specificity">
    <text evidence="3 4 5 6 8">Expressed in tuber (at protein level).</text>
</comment>
<comment type="PTM">
    <text evidence="5">Not glycosylated.</text>
</comment>
<comment type="allergen">
    <text evidence="6 7">Causes an allergic reaction in human. Binds to IgE of patients allergic to Chinese yam (PubMed:18303202, PubMed:29423371). Patients can be sensitized to this protein via an oral or inhalant route (PubMed:18303202). Thermal stable oral allergen, which can to trigger anaphylactic reaction and oral allergy syndrome even when consumed as cooked. Activates human basophils (PubMed:29423371).</text>
</comment>
<comment type="similarity">
    <text evidence="12">Belongs to the alpha-class carbonic anhydrase family.</text>
</comment>
<comment type="caution">
    <text evidence="1">Despite overall sequence similarity to the typical alpha class carbonic anhydrases, lacks one of the three conserved catalytic zinc-ligand histidines. The carbonate dehydratase activity of this protein is zinc-independent.</text>
</comment>
<comment type="caution">
    <text evidence="12">It is uncertain whether the mature protein starts at position 22 or 23. The first residue of the N-terminus obtained by direct protein sequencing is 'Asn-22' according to PubMed:18303202, but it is 'Val-23' according to PubMed:15047697, PubMed:10552514 and PubMed:29423371.</text>
</comment>
<proteinExistence type="evidence at protein level"/>